<evidence type="ECO:0000250" key="1"/>
<evidence type="ECO:0000255" key="2"/>
<evidence type="ECO:0000256" key="3">
    <source>
        <dbReference type="SAM" id="MobiDB-lite"/>
    </source>
</evidence>
<evidence type="ECO:0000305" key="4"/>
<organism>
    <name type="scientific">Botryotinia fuckeliana (strain B05.10)</name>
    <name type="common">Noble rot fungus</name>
    <name type="synonym">Botrytis cinerea</name>
    <dbReference type="NCBI Taxonomy" id="332648"/>
    <lineage>
        <taxon>Eukaryota</taxon>
        <taxon>Fungi</taxon>
        <taxon>Dikarya</taxon>
        <taxon>Ascomycota</taxon>
        <taxon>Pezizomycotina</taxon>
        <taxon>Leotiomycetes</taxon>
        <taxon>Helotiales</taxon>
        <taxon>Sclerotiniaceae</taxon>
        <taxon>Botrytis</taxon>
    </lineage>
</organism>
<proteinExistence type="inferred from homology"/>
<comment type="function">
    <text evidence="1">Essential for the assembly of ubiquinol-cytochrome c reductase. It has a direct effect on the correct occurrence of the Rieske protein, core 4, core 5 and apocytochrome b (By similarity).</text>
</comment>
<comment type="subcellular location">
    <subcellularLocation>
        <location evidence="1">Mitochondrion inner membrane</location>
        <topology evidence="1">Single-pass membrane protein</topology>
    </subcellularLocation>
</comment>
<comment type="similarity">
    <text evidence="4">Belongs to the CBP4 family.</text>
</comment>
<gene>
    <name type="primary">cbp4</name>
    <name type="ORF">BC1G_09937</name>
    <name type="ORF">BCIN_09g03890</name>
</gene>
<feature type="chain" id="PRO_0000330122" description="Assembly factor cbp4">
    <location>
        <begin position="1"/>
        <end position="125"/>
    </location>
</feature>
<feature type="transmembrane region" description="Helical" evidence="2">
    <location>
        <begin position="10"/>
        <end position="32"/>
    </location>
</feature>
<feature type="region of interest" description="Disordered" evidence="3">
    <location>
        <begin position="103"/>
        <end position="125"/>
    </location>
</feature>
<feature type="coiled-coil region" evidence="2">
    <location>
        <begin position="92"/>
        <end position="119"/>
    </location>
</feature>
<sequence>MPPKPTNWRMYGKMAVAGLTCCVGGPALIYYISPTEEELFLKYNPELQKRSLENRVGKQEDFDNFVARLKEYSKSDRPIWVEAEEAARKKRSGKIEEQAKLMQEMQQRKEEIKKSGTNLMPGGSL</sequence>
<protein>
    <recommendedName>
        <fullName>Assembly factor cbp4</fullName>
    </recommendedName>
    <alternativeName>
        <fullName>Cytochrome b mRNA-processing protein 4</fullName>
    </alternativeName>
</protein>
<keyword id="KW-0143">Chaperone</keyword>
<keyword id="KW-0175">Coiled coil</keyword>
<keyword id="KW-0472">Membrane</keyword>
<keyword id="KW-0496">Mitochondrion</keyword>
<keyword id="KW-0999">Mitochondrion inner membrane</keyword>
<keyword id="KW-1185">Reference proteome</keyword>
<keyword id="KW-0812">Transmembrane</keyword>
<keyword id="KW-1133">Transmembrane helix</keyword>
<reference key="1">
    <citation type="journal article" date="2011" name="PLoS Genet.">
        <title>Genomic analysis of the necrotrophic fungal pathogens Sclerotinia sclerotiorum and Botrytis cinerea.</title>
        <authorList>
            <person name="Amselem J."/>
            <person name="Cuomo C.A."/>
            <person name="van Kan J.A.L."/>
            <person name="Viaud M."/>
            <person name="Benito E.P."/>
            <person name="Couloux A."/>
            <person name="Coutinho P.M."/>
            <person name="de Vries R.P."/>
            <person name="Dyer P.S."/>
            <person name="Fillinger S."/>
            <person name="Fournier E."/>
            <person name="Gout L."/>
            <person name="Hahn M."/>
            <person name="Kohn L."/>
            <person name="Lapalu N."/>
            <person name="Plummer K.M."/>
            <person name="Pradier J.-M."/>
            <person name="Quevillon E."/>
            <person name="Sharon A."/>
            <person name="Simon A."/>
            <person name="ten Have A."/>
            <person name="Tudzynski B."/>
            <person name="Tudzynski P."/>
            <person name="Wincker P."/>
            <person name="Andrew M."/>
            <person name="Anthouard V."/>
            <person name="Beever R.E."/>
            <person name="Beffa R."/>
            <person name="Benoit I."/>
            <person name="Bouzid O."/>
            <person name="Brault B."/>
            <person name="Chen Z."/>
            <person name="Choquer M."/>
            <person name="Collemare J."/>
            <person name="Cotton P."/>
            <person name="Danchin E.G."/>
            <person name="Da Silva C."/>
            <person name="Gautier A."/>
            <person name="Giraud C."/>
            <person name="Giraud T."/>
            <person name="Gonzalez C."/>
            <person name="Grossetete S."/>
            <person name="Gueldener U."/>
            <person name="Henrissat B."/>
            <person name="Howlett B.J."/>
            <person name="Kodira C."/>
            <person name="Kretschmer M."/>
            <person name="Lappartient A."/>
            <person name="Leroch M."/>
            <person name="Levis C."/>
            <person name="Mauceli E."/>
            <person name="Neuveglise C."/>
            <person name="Oeser B."/>
            <person name="Pearson M."/>
            <person name="Poulain J."/>
            <person name="Poussereau N."/>
            <person name="Quesneville H."/>
            <person name="Rascle C."/>
            <person name="Schumacher J."/>
            <person name="Segurens B."/>
            <person name="Sexton A."/>
            <person name="Silva E."/>
            <person name="Sirven C."/>
            <person name="Soanes D.M."/>
            <person name="Talbot N.J."/>
            <person name="Templeton M."/>
            <person name="Yandava C."/>
            <person name="Yarden O."/>
            <person name="Zeng Q."/>
            <person name="Rollins J.A."/>
            <person name="Lebrun M.-H."/>
            <person name="Dickman M."/>
        </authorList>
    </citation>
    <scope>NUCLEOTIDE SEQUENCE [LARGE SCALE GENOMIC DNA]</scope>
    <source>
        <strain>B05.10</strain>
    </source>
</reference>
<reference key="2">
    <citation type="journal article" date="2012" name="Eukaryot. Cell">
        <title>Genome update of Botrytis cinerea strains B05.10 and T4.</title>
        <authorList>
            <person name="Staats M."/>
            <person name="van Kan J.A.L."/>
        </authorList>
    </citation>
    <scope>NUCLEOTIDE SEQUENCE [LARGE SCALE GENOMIC DNA]</scope>
    <scope>GENOME REANNOTATION</scope>
    <source>
        <strain>B05.10</strain>
    </source>
</reference>
<reference key="3">
    <citation type="journal article" date="2017" name="Mol. Plant Pathol.">
        <title>A gapless genome sequence of the fungus Botrytis cinerea.</title>
        <authorList>
            <person name="van Kan J.A.L."/>
            <person name="Stassen J.H.M."/>
            <person name="Mosbach A."/>
            <person name="van der Lee T.A.J."/>
            <person name="Faino L."/>
            <person name="Farmer A.D."/>
            <person name="Papasotiriou D.G."/>
            <person name="Zhou S."/>
            <person name="Seidl M.F."/>
            <person name="Cottam E."/>
            <person name="Edel D."/>
            <person name="Hahn M."/>
            <person name="Schwartz D.C."/>
            <person name="Dietrich R.A."/>
            <person name="Widdison S."/>
            <person name="Scalliet G."/>
        </authorList>
    </citation>
    <scope>NUCLEOTIDE SEQUENCE [LARGE SCALE GENOMIC DNA]</scope>
    <scope>GENOME REANNOTATION</scope>
    <source>
        <strain>B05.10</strain>
    </source>
</reference>
<dbReference type="EMBL" id="CP009813">
    <property type="protein sequence ID" value="ATZ53557.1"/>
    <property type="molecule type" value="Genomic_DNA"/>
</dbReference>
<dbReference type="RefSeq" id="XP_001551563.1">
    <property type="nucleotide sequence ID" value="XM_001551513.1"/>
</dbReference>
<dbReference type="SMR" id="A6SAY2"/>
<dbReference type="EnsemblFungi" id="Bcin09g03890.1">
    <property type="protein sequence ID" value="Bcin09p03890.1"/>
    <property type="gene ID" value="Bcin09g03890"/>
</dbReference>
<dbReference type="GeneID" id="5432058"/>
<dbReference type="KEGG" id="bfu:BCIN_09g03890"/>
<dbReference type="VEuPathDB" id="FungiDB:Bcin09g03890"/>
<dbReference type="OMA" id="DKPIWVV"/>
<dbReference type="OrthoDB" id="5576752at2759"/>
<dbReference type="Proteomes" id="UP000001798">
    <property type="component" value="Chromosome bcin09"/>
</dbReference>
<dbReference type="GO" id="GO:0005743">
    <property type="term" value="C:mitochondrial inner membrane"/>
    <property type="evidence" value="ECO:0007669"/>
    <property type="project" value="UniProtKB-SubCell"/>
</dbReference>
<dbReference type="GO" id="GO:0034551">
    <property type="term" value="P:mitochondrial respiratory chain complex III assembly"/>
    <property type="evidence" value="ECO:0007669"/>
    <property type="project" value="TreeGrafter"/>
</dbReference>
<dbReference type="InterPro" id="IPR012420">
    <property type="entry name" value="Cbp4"/>
</dbReference>
<dbReference type="PANTHER" id="PTHR28202">
    <property type="entry name" value="ASSEMBLY FACTOR CBP4"/>
    <property type="match status" value="1"/>
</dbReference>
<dbReference type="PANTHER" id="PTHR28202:SF1">
    <property type="entry name" value="ASSEMBLY FACTOR CBP4"/>
    <property type="match status" value="1"/>
</dbReference>
<dbReference type="Pfam" id="PF07960">
    <property type="entry name" value="CBP4"/>
    <property type="match status" value="1"/>
</dbReference>
<name>CBP4_BOTFB</name>
<accession>A6SAY2</accession>
<accession>A0A384JT38</accession>